<reference key="1">
    <citation type="submission" date="2006-05" db="EMBL/GenBank/DDBJ databases">
        <authorList>
            <consortium name="Genoscope"/>
        </authorList>
    </citation>
    <scope>NUCLEOTIDE SEQUENCE [LARGE SCALE GENOMIC DNA]</scope>
    <source>
        <strain>WH7803</strain>
    </source>
</reference>
<proteinExistence type="inferred from homology"/>
<accession>A5GJI3</accession>
<protein>
    <recommendedName>
        <fullName evidence="1">Light-independent protochlorophyllide reductase subunit N</fullName>
        <shortName evidence="1">DPOR subunit N</shortName>
        <shortName evidence="1">LI-POR subunit N</shortName>
        <ecNumber evidence="1">1.3.7.7</ecNumber>
    </recommendedName>
</protein>
<name>CHLN_SYNPW</name>
<organism>
    <name type="scientific">Synechococcus sp. (strain WH7803)</name>
    <dbReference type="NCBI Taxonomy" id="32051"/>
    <lineage>
        <taxon>Bacteria</taxon>
        <taxon>Bacillati</taxon>
        <taxon>Cyanobacteriota</taxon>
        <taxon>Cyanophyceae</taxon>
        <taxon>Synechococcales</taxon>
        <taxon>Synechococcaceae</taxon>
        <taxon>Synechococcus</taxon>
    </lineage>
</organism>
<sequence length="424" mass="46410">MSANLLKESGPREVFCGLTSIVWLHRRMPDAFFLVVGSRTCAHLIQSAAGVMIFAEPRFGTAILSERDLAGLADAHDELDRVARELLMRRPEIRTLFLVGSCPSEVIKLDLARAAERLNEELQGRVRVVNYSGSGIETTFTQGEDGALAALVPLLPASESRQLLLVGTLADAVEDRLIHLFSKLGIESVRSLPPRQSSELPPVGSGTTVLLTQPFLTETARLLRDRGATVLKAPFPLGAEGSRRWMEAAAADFHCPEASVRAVLDPLEARARIALAPHREVLAGKRIFLLPESQLELPLARFLHRECGMDLVEVGVPYLNREQMAEELALLPDGTTVVEGQHVERQLDRVRAGHPDLVVCGMGLANPLEAEGITTKWSIELVFSPIHGIDQAGDLAELFSRPLHRRQLIHSALHPQASDHPVHA</sequence>
<comment type="function">
    <text evidence="1">Component of the dark-operative protochlorophyllide reductase (DPOR) that uses Mg-ATP and reduced ferredoxin to reduce ring D of protochlorophyllide (Pchlide) to form chlorophyllide a (Chlide). This reaction is light-independent. The NB-protein (ChlN-ChlB) is the catalytic component of the complex.</text>
</comment>
<comment type="catalytic activity">
    <reaction evidence="1">
        <text>chlorophyllide a + oxidized 2[4Fe-4S]-[ferredoxin] + 2 ADP + 2 phosphate = protochlorophyllide a + reduced 2[4Fe-4S]-[ferredoxin] + 2 ATP + 2 H2O</text>
        <dbReference type="Rhea" id="RHEA:28202"/>
        <dbReference type="Rhea" id="RHEA-COMP:10002"/>
        <dbReference type="Rhea" id="RHEA-COMP:10004"/>
        <dbReference type="ChEBI" id="CHEBI:15377"/>
        <dbReference type="ChEBI" id="CHEBI:30616"/>
        <dbReference type="ChEBI" id="CHEBI:33722"/>
        <dbReference type="ChEBI" id="CHEBI:33723"/>
        <dbReference type="ChEBI" id="CHEBI:43474"/>
        <dbReference type="ChEBI" id="CHEBI:83348"/>
        <dbReference type="ChEBI" id="CHEBI:83350"/>
        <dbReference type="ChEBI" id="CHEBI:456216"/>
        <dbReference type="EC" id="1.3.7.7"/>
    </reaction>
</comment>
<comment type="cofactor">
    <cofactor evidence="1">
        <name>[4Fe-4S] cluster</name>
        <dbReference type="ChEBI" id="CHEBI:49883"/>
    </cofactor>
    <text evidence="1">Binds 1 [4Fe-4S] cluster per heterodimer. The cluster is bound at the heterodimer interface by residues from both subunits.</text>
</comment>
<comment type="pathway">
    <text evidence="1">Porphyrin-containing compound metabolism; chlorophyll biosynthesis (light-independent).</text>
</comment>
<comment type="subunit">
    <text evidence="1">Protochlorophyllide reductase is composed of three subunits; ChlL, ChlN and ChlB. Forms a heterotetramer of two ChlB and two ChlN subunits.</text>
</comment>
<comment type="similarity">
    <text evidence="1">Belongs to the BchN/ChlN family.</text>
</comment>
<comment type="sequence caution" evidence="2">
    <conflict type="erroneous initiation">
        <sequence resource="EMBL-CDS" id="CAK23098"/>
    </conflict>
</comment>
<gene>
    <name evidence="1" type="primary">chlN</name>
    <name type="ordered locus">SynWH7803_0672</name>
</gene>
<dbReference type="EC" id="1.3.7.7" evidence="1"/>
<dbReference type="EMBL" id="CT971583">
    <property type="protein sequence ID" value="CAK23098.1"/>
    <property type="status" value="ALT_INIT"/>
    <property type="molecule type" value="Genomic_DNA"/>
</dbReference>
<dbReference type="SMR" id="A5GJI3"/>
<dbReference type="STRING" id="32051.SynWH7803_0672"/>
<dbReference type="KEGG" id="syx:SynWH7803_0672"/>
<dbReference type="eggNOG" id="COG2710">
    <property type="taxonomic scope" value="Bacteria"/>
</dbReference>
<dbReference type="HOGENOM" id="CLU_037170_0_0_3"/>
<dbReference type="OrthoDB" id="5714774at2"/>
<dbReference type="UniPathway" id="UPA00670"/>
<dbReference type="Proteomes" id="UP000001566">
    <property type="component" value="Chromosome"/>
</dbReference>
<dbReference type="GO" id="GO:0051539">
    <property type="term" value="F:4 iron, 4 sulfur cluster binding"/>
    <property type="evidence" value="ECO:0007669"/>
    <property type="project" value="UniProtKB-UniRule"/>
</dbReference>
<dbReference type="GO" id="GO:0005524">
    <property type="term" value="F:ATP binding"/>
    <property type="evidence" value="ECO:0007669"/>
    <property type="project" value="UniProtKB-UniRule"/>
</dbReference>
<dbReference type="GO" id="GO:0046872">
    <property type="term" value="F:metal ion binding"/>
    <property type="evidence" value="ECO:0007669"/>
    <property type="project" value="UniProtKB-KW"/>
</dbReference>
<dbReference type="GO" id="GO:0016730">
    <property type="term" value="F:oxidoreductase activity, acting on iron-sulfur proteins as donors"/>
    <property type="evidence" value="ECO:0007669"/>
    <property type="project" value="InterPro"/>
</dbReference>
<dbReference type="GO" id="GO:0016636">
    <property type="term" value="F:oxidoreductase activity, acting on the CH-CH group of donors, iron-sulfur protein as acceptor"/>
    <property type="evidence" value="ECO:0007669"/>
    <property type="project" value="UniProtKB-UniRule"/>
</dbReference>
<dbReference type="GO" id="GO:0036068">
    <property type="term" value="P:light-independent chlorophyll biosynthetic process"/>
    <property type="evidence" value="ECO:0007669"/>
    <property type="project" value="UniProtKB-UniRule"/>
</dbReference>
<dbReference type="GO" id="GO:0019685">
    <property type="term" value="P:photosynthesis, dark reaction"/>
    <property type="evidence" value="ECO:0007669"/>
    <property type="project" value="InterPro"/>
</dbReference>
<dbReference type="Gene3D" id="3.40.50.1980">
    <property type="entry name" value="Nitrogenase molybdenum iron protein domain"/>
    <property type="match status" value="3"/>
</dbReference>
<dbReference type="HAMAP" id="MF_00352">
    <property type="entry name" value="ChlN_BchN"/>
    <property type="match status" value="1"/>
</dbReference>
<dbReference type="InterPro" id="IPR050293">
    <property type="entry name" value="LIPOR_BchN/ChlN"/>
</dbReference>
<dbReference type="InterPro" id="IPR000510">
    <property type="entry name" value="Nase/OxRdtase_comp1"/>
</dbReference>
<dbReference type="InterPro" id="IPR005970">
    <property type="entry name" value="Protochl_reductN"/>
</dbReference>
<dbReference type="NCBIfam" id="TIGR01279">
    <property type="entry name" value="DPOR_bchN"/>
    <property type="match status" value="1"/>
</dbReference>
<dbReference type="NCBIfam" id="NF002768">
    <property type="entry name" value="PRK02842.1"/>
    <property type="match status" value="1"/>
</dbReference>
<dbReference type="PANTHER" id="PTHR39429">
    <property type="entry name" value="LIGHT-INDEPENDENT PROTOCHLOROPHYLLIDE REDUCTASE SUBUNIT N"/>
    <property type="match status" value="1"/>
</dbReference>
<dbReference type="PANTHER" id="PTHR39429:SF3">
    <property type="entry name" value="LIGHT-INDEPENDENT PROTOCHLOROPHYLLIDE REDUCTASE SUBUNIT N"/>
    <property type="match status" value="1"/>
</dbReference>
<dbReference type="Pfam" id="PF00148">
    <property type="entry name" value="Oxidored_nitro"/>
    <property type="match status" value="1"/>
</dbReference>
<dbReference type="PIRSF" id="PIRSF000162">
    <property type="entry name" value="P_chlorophyll_rd"/>
    <property type="match status" value="1"/>
</dbReference>
<dbReference type="SUPFAM" id="SSF53807">
    <property type="entry name" value="Helical backbone' metal receptor"/>
    <property type="match status" value="1"/>
</dbReference>
<feature type="chain" id="PRO_0000324032" description="Light-independent protochlorophyllide reductase subunit N">
    <location>
        <begin position="1"/>
        <end position="424"/>
    </location>
</feature>
<feature type="binding site" evidence="1">
    <location>
        <position position="16"/>
    </location>
    <ligand>
        <name>[4Fe-4S] cluster</name>
        <dbReference type="ChEBI" id="CHEBI:49883"/>
        <note>ligand shared with heterodimeric partner</note>
    </ligand>
</feature>
<feature type="binding site" evidence="1">
    <location>
        <position position="41"/>
    </location>
    <ligand>
        <name>[4Fe-4S] cluster</name>
        <dbReference type="ChEBI" id="CHEBI:49883"/>
        <note>ligand shared with heterodimeric partner</note>
    </ligand>
</feature>
<feature type="binding site" evidence="1">
    <location>
        <position position="102"/>
    </location>
    <ligand>
        <name>[4Fe-4S] cluster</name>
        <dbReference type="ChEBI" id="CHEBI:49883"/>
        <note>ligand shared with heterodimeric partner</note>
    </ligand>
</feature>
<evidence type="ECO:0000255" key="1">
    <source>
        <dbReference type="HAMAP-Rule" id="MF_00352"/>
    </source>
</evidence>
<evidence type="ECO:0000305" key="2"/>
<keyword id="KW-0004">4Fe-4S</keyword>
<keyword id="KW-0067">ATP-binding</keyword>
<keyword id="KW-0149">Chlorophyll biosynthesis</keyword>
<keyword id="KW-0408">Iron</keyword>
<keyword id="KW-0411">Iron-sulfur</keyword>
<keyword id="KW-0479">Metal-binding</keyword>
<keyword id="KW-0547">Nucleotide-binding</keyword>
<keyword id="KW-0560">Oxidoreductase</keyword>
<keyword id="KW-0602">Photosynthesis</keyword>
<keyword id="KW-1185">Reference proteome</keyword>